<evidence type="ECO:0000250" key="1"/>
<evidence type="ECO:0000255" key="2">
    <source>
        <dbReference type="PROSITE-ProRule" id="PRU00303"/>
    </source>
</evidence>
<evidence type="ECO:0000256" key="3">
    <source>
        <dbReference type="SAM" id="MobiDB-lite"/>
    </source>
</evidence>
<evidence type="ECO:0000305" key="4"/>
<organism>
    <name type="scientific">Staphylococcus epidermidis (strain ATCC 12228 / FDA PCI 1200)</name>
    <dbReference type="NCBI Taxonomy" id="176280"/>
    <lineage>
        <taxon>Bacteria</taxon>
        <taxon>Bacillati</taxon>
        <taxon>Bacillota</taxon>
        <taxon>Bacilli</taxon>
        <taxon>Bacillales</taxon>
        <taxon>Staphylococcaceae</taxon>
        <taxon>Staphylococcus</taxon>
    </lineage>
</organism>
<proteinExistence type="inferred from homology"/>
<gene>
    <name type="primary">pstS</name>
    <name type="ordered locus">SE_1070</name>
</gene>
<reference key="1">
    <citation type="journal article" date="2003" name="Mol. Microbiol.">
        <title>Genome-based analysis of virulence genes in a non-biofilm-forming Staphylococcus epidermidis strain (ATCC 12228).</title>
        <authorList>
            <person name="Zhang Y.-Q."/>
            <person name="Ren S.-X."/>
            <person name="Li H.-L."/>
            <person name="Wang Y.-X."/>
            <person name="Fu G."/>
            <person name="Yang J."/>
            <person name="Qin Z.-Q."/>
            <person name="Miao Y.-G."/>
            <person name="Wang W.-Y."/>
            <person name="Chen R.-S."/>
            <person name="Shen Y."/>
            <person name="Chen Z."/>
            <person name="Yuan Z.-H."/>
            <person name="Zhao G.-P."/>
            <person name="Qu D."/>
            <person name="Danchin A."/>
            <person name="Wen Y.-M."/>
        </authorList>
    </citation>
    <scope>NUCLEOTIDE SEQUENCE [LARGE SCALE GENOMIC DNA]</scope>
    <source>
        <strain>ATCC 12228 / FDA PCI 1200</strain>
    </source>
</reference>
<sequence>MKKWQLVGTTVLGASVLLGACGGNDGGSGDGKDLKGSAKGEGSSTVAPIVEKLNEKWAKDHKDAKISSGQAGTGAGFQKFIAGETDFSDASRPIKDEEKKKLEDKGIKYHEFKIAQDGVTIAVNKDNDFVKELTKSQLKDIYSGKAKTWKDVNSSWPDKKINAVSPNSSHGTYDFFEEEVMDKQDIKAEKNADTNAIVSSVTKNKEGIGYFGYNFYEQNKDKLKEVKIKDDNGKVTEPTKKTIQNGSYALSRPLFIYAKDKSLKDNKVMSEFMKFVLEDEGKAAEDAGYVASPKKTYKSQLDDLKDFLDKHQKSDKKDDKKSEDK</sequence>
<feature type="signal peptide" evidence="2">
    <location>
        <begin position="1"/>
        <end position="20"/>
    </location>
</feature>
<feature type="chain" id="PRO_0000281663" description="Phosphate-binding protein PstS">
    <location>
        <begin position="21"/>
        <end position="325"/>
    </location>
</feature>
<feature type="region of interest" description="Disordered" evidence="3">
    <location>
        <begin position="23"/>
        <end position="46"/>
    </location>
</feature>
<feature type="lipid moiety-binding region" description="N-palmitoyl cysteine" evidence="2">
    <location>
        <position position="21"/>
    </location>
</feature>
<feature type="lipid moiety-binding region" description="S-diacylglycerol cysteine" evidence="2">
    <location>
        <position position="21"/>
    </location>
</feature>
<name>PSTS_STAES</name>
<keyword id="KW-1003">Cell membrane</keyword>
<keyword id="KW-0449">Lipoprotein</keyword>
<keyword id="KW-0472">Membrane</keyword>
<keyword id="KW-0564">Palmitate</keyword>
<keyword id="KW-0592">Phosphate transport</keyword>
<keyword id="KW-0732">Signal</keyword>
<keyword id="KW-0813">Transport</keyword>
<comment type="function">
    <text evidence="1">Part of the ABC transporter complex PstSACB involved in phosphate import.</text>
</comment>
<comment type="subunit">
    <text evidence="4">The complex is composed of two ATP-binding proteins (PstB), two transmembrane proteins (PstC and PstA) and a solute-binding protein (PstS).</text>
</comment>
<comment type="subcellular location">
    <subcellularLocation>
        <location evidence="4">Cell membrane</location>
        <topology evidence="4">Lipid-anchor</topology>
    </subcellularLocation>
</comment>
<comment type="similarity">
    <text evidence="4">Belongs to the PstS family.</text>
</comment>
<dbReference type="EMBL" id="AE015929">
    <property type="protein sequence ID" value="AAO04667.1"/>
    <property type="molecule type" value="Genomic_DNA"/>
</dbReference>
<dbReference type="RefSeq" id="NP_764625.1">
    <property type="nucleotide sequence ID" value="NC_004461.1"/>
</dbReference>
<dbReference type="RefSeq" id="WP_001831206.1">
    <property type="nucleotide sequence ID" value="NZ_WBME01000002.1"/>
</dbReference>
<dbReference type="SMR" id="Q8CP98"/>
<dbReference type="KEGG" id="sep:SE_1070"/>
<dbReference type="PATRIC" id="fig|176280.10.peg.1046"/>
<dbReference type="eggNOG" id="COG0226">
    <property type="taxonomic scope" value="Bacteria"/>
</dbReference>
<dbReference type="HOGENOM" id="CLU_026228_1_1_9"/>
<dbReference type="OrthoDB" id="9790048at2"/>
<dbReference type="Proteomes" id="UP000001411">
    <property type="component" value="Chromosome"/>
</dbReference>
<dbReference type="GO" id="GO:0005886">
    <property type="term" value="C:plasma membrane"/>
    <property type="evidence" value="ECO:0007669"/>
    <property type="project" value="UniProtKB-SubCell"/>
</dbReference>
<dbReference type="GO" id="GO:0042301">
    <property type="term" value="F:phosphate ion binding"/>
    <property type="evidence" value="ECO:0007669"/>
    <property type="project" value="InterPro"/>
</dbReference>
<dbReference type="GO" id="GO:0006817">
    <property type="term" value="P:phosphate ion transport"/>
    <property type="evidence" value="ECO:0007669"/>
    <property type="project" value="UniProtKB-KW"/>
</dbReference>
<dbReference type="CDD" id="cd13654">
    <property type="entry name" value="PBP2_phosphate_like_2"/>
    <property type="match status" value="1"/>
</dbReference>
<dbReference type="Gene3D" id="3.40.190.10">
    <property type="entry name" value="Periplasmic binding protein-like II"/>
    <property type="match status" value="2"/>
</dbReference>
<dbReference type="InterPro" id="IPR024370">
    <property type="entry name" value="PBP_domain"/>
</dbReference>
<dbReference type="InterPro" id="IPR011862">
    <property type="entry name" value="Phos-bd"/>
</dbReference>
<dbReference type="InterPro" id="IPR050811">
    <property type="entry name" value="Phosphate_ABC_transporter"/>
</dbReference>
<dbReference type="NCBIfam" id="TIGR02136">
    <property type="entry name" value="ptsS_2"/>
    <property type="match status" value="1"/>
</dbReference>
<dbReference type="PANTHER" id="PTHR30570">
    <property type="entry name" value="PERIPLASMIC PHOSPHATE BINDING COMPONENT OF PHOSPHATE ABC TRANSPORTER"/>
    <property type="match status" value="1"/>
</dbReference>
<dbReference type="PANTHER" id="PTHR30570:SF1">
    <property type="entry name" value="PHOSPHATE-BINDING PROTEIN PSTS"/>
    <property type="match status" value="1"/>
</dbReference>
<dbReference type="Pfam" id="PF12849">
    <property type="entry name" value="PBP_like_2"/>
    <property type="match status" value="1"/>
</dbReference>
<dbReference type="SUPFAM" id="SSF53850">
    <property type="entry name" value="Periplasmic binding protein-like II"/>
    <property type="match status" value="1"/>
</dbReference>
<dbReference type="PROSITE" id="PS51257">
    <property type="entry name" value="PROKAR_LIPOPROTEIN"/>
    <property type="match status" value="1"/>
</dbReference>
<accession>Q8CP98</accession>
<protein>
    <recommendedName>
        <fullName>Phosphate-binding protein PstS</fullName>
        <shortName>PBP</shortName>
    </recommendedName>
</protein>